<proteinExistence type="evidence at transcript level"/>
<keyword id="KW-1015">Disulfide bond</keyword>
<keyword id="KW-0325">Glycoprotein</keyword>
<keyword id="KW-1185">Reference proteome</keyword>
<keyword id="KW-0732">Signal</keyword>
<gene>
    <name evidence="10" type="primary">spz3</name>
    <name evidence="10" type="ORF">CG7104</name>
</gene>
<accession>Q9VLV7</accession>
<accession>Q8WTE9</accession>
<dbReference type="EMBL" id="AF296285">
    <property type="protein sequence ID" value="AAL33883.1"/>
    <property type="molecule type" value="mRNA"/>
</dbReference>
<dbReference type="EMBL" id="AE014134">
    <property type="protein sequence ID" value="AAF52574.2"/>
    <property type="molecule type" value="Genomic_DNA"/>
</dbReference>
<dbReference type="EMBL" id="AY121674">
    <property type="protein sequence ID" value="AAM52001.1"/>
    <property type="molecule type" value="mRNA"/>
</dbReference>
<dbReference type="RefSeq" id="NP_609160.2">
    <property type="nucleotide sequence ID" value="NM_135316.3"/>
</dbReference>
<dbReference type="FunCoup" id="Q9VLV7">
    <property type="interactions" value="38"/>
</dbReference>
<dbReference type="IntAct" id="Q9VLV7">
    <property type="interactions" value="2"/>
</dbReference>
<dbReference type="STRING" id="7227.FBpp0079183"/>
<dbReference type="GlyCosmos" id="Q9VLV7">
    <property type="glycosylation" value="4 sites, No reported glycans"/>
</dbReference>
<dbReference type="GlyGen" id="Q9VLV7">
    <property type="glycosylation" value="4 sites"/>
</dbReference>
<dbReference type="PaxDb" id="7227-FBpp0079183"/>
<dbReference type="DNASU" id="34077"/>
<dbReference type="EnsemblMetazoa" id="FBtr0079561">
    <property type="protein sequence ID" value="FBpp0079183"/>
    <property type="gene ID" value="FBgn0031959"/>
</dbReference>
<dbReference type="GeneID" id="34077"/>
<dbReference type="KEGG" id="dme:Dmel_CG7104"/>
<dbReference type="UCSC" id="CG7104-RA">
    <property type="organism name" value="d. melanogaster"/>
</dbReference>
<dbReference type="AGR" id="FB:FBgn0031959"/>
<dbReference type="CTD" id="34077"/>
<dbReference type="FlyBase" id="FBgn0031959">
    <property type="gene designation" value="spz3"/>
</dbReference>
<dbReference type="VEuPathDB" id="VectorBase:FBgn0031959"/>
<dbReference type="eggNOG" id="ENOG502QWM3">
    <property type="taxonomic scope" value="Eukaryota"/>
</dbReference>
<dbReference type="HOGENOM" id="CLU_035541_1_0_1"/>
<dbReference type="InParanoid" id="Q9VLV7"/>
<dbReference type="OMA" id="QGTAYLP"/>
<dbReference type="OrthoDB" id="6630583at2759"/>
<dbReference type="PhylomeDB" id="Q9VLV7"/>
<dbReference type="BioGRID-ORCS" id="34077">
    <property type="hits" value="0 hits in 1 CRISPR screen"/>
</dbReference>
<dbReference type="GenomeRNAi" id="34077"/>
<dbReference type="PRO" id="PR:Q9VLV7"/>
<dbReference type="Proteomes" id="UP000000803">
    <property type="component" value="Chromosome 2L"/>
</dbReference>
<dbReference type="Bgee" id="FBgn0031959">
    <property type="expression patterns" value="Expressed in adult tracheocyte (Drosophila) in post-embryonic organism and 20 other cell types or tissues"/>
</dbReference>
<dbReference type="GO" id="GO:0005576">
    <property type="term" value="C:extracellular region"/>
    <property type="evidence" value="ECO:0000318"/>
    <property type="project" value="GO_Central"/>
</dbReference>
<dbReference type="GO" id="GO:0005615">
    <property type="term" value="C:extracellular space"/>
    <property type="evidence" value="ECO:0000314"/>
    <property type="project" value="FlyBase"/>
</dbReference>
<dbReference type="GO" id="GO:0008083">
    <property type="term" value="F:growth factor activity"/>
    <property type="evidence" value="ECO:0000318"/>
    <property type="project" value="GO_Central"/>
</dbReference>
<dbReference type="GO" id="GO:0005121">
    <property type="term" value="F:Toll binding"/>
    <property type="evidence" value="ECO:0000318"/>
    <property type="project" value="GO_Central"/>
</dbReference>
<dbReference type="GO" id="GO:0021556">
    <property type="term" value="P:central nervous system formation"/>
    <property type="evidence" value="ECO:0000318"/>
    <property type="project" value="GO_Central"/>
</dbReference>
<dbReference type="GO" id="GO:0045087">
    <property type="term" value="P:innate immune response"/>
    <property type="evidence" value="ECO:0000318"/>
    <property type="project" value="GO_Central"/>
</dbReference>
<dbReference type="FunFam" id="2.10.90.10:FF:000018">
    <property type="entry name" value="Spatzle 4"/>
    <property type="match status" value="1"/>
</dbReference>
<dbReference type="Gene3D" id="2.10.90.10">
    <property type="entry name" value="Cystine-knot cytokines"/>
    <property type="match status" value="1"/>
</dbReference>
<dbReference type="InterPro" id="IPR029034">
    <property type="entry name" value="Cystine-knot_cytokine"/>
</dbReference>
<dbReference type="InterPro" id="IPR032104">
    <property type="entry name" value="Spaetzle"/>
</dbReference>
<dbReference type="InterPro" id="IPR052444">
    <property type="entry name" value="Spz/Toll_ligand-like"/>
</dbReference>
<dbReference type="PANTHER" id="PTHR23199">
    <property type="entry name" value="NEUROTROPHIN 1-RELATED"/>
    <property type="match status" value="1"/>
</dbReference>
<dbReference type="PANTHER" id="PTHR23199:SF13">
    <property type="entry name" value="PROTEIN SPAETZLE 3"/>
    <property type="match status" value="1"/>
</dbReference>
<dbReference type="Pfam" id="PF16077">
    <property type="entry name" value="Spaetzle"/>
    <property type="match status" value="1"/>
</dbReference>
<dbReference type="SUPFAM" id="SSF57501">
    <property type="entry name" value="Cystine-knot cytokines"/>
    <property type="match status" value="1"/>
</dbReference>
<evidence type="ECO:0000250" key="1">
    <source>
        <dbReference type="UniProtKB" id="P48607"/>
    </source>
</evidence>
<evidence type="ECO:0000255" key="2"/>
<evidence type="ECO:0000255" key="3">
    <source>
        <dbReference type="PROSITE-ProRule" id="PRU00498"/>
    </source>
</evidence>
<evidence type="ECO:0000256" key="4">
    <source>
        <dbReference type="SAM" id="MobiDB-lite"/>
    </source>
</evidence>
<evidence type="ECO:0000269" key="5">
    <source>
    </source>
</evidence>
<evidence type="ECO:0000303" key="6">
    <source>
    </source>
</evidence>
<evidence type="ECO:0000305" key="7"/>
<evidence type="ECO:0000312" key="8">
    <source>
        <dbReference type="EMBL" id="AAL33883.1"/>
    </source>
</evidence>
<evidence type="ECO:0000312" key="9">
    <source>
        <dbReference type="EMBL" id="AAM52001.1"/>
    </source>
</evidence>
<evidence type="ECO:0000312" key="10">
    <source>
        <dbReference type="FlyBase" id="FBgn0031959"/>
    </source>
</evidence>
<evidence type="ECO:0000312" key="11">
    <source>
        <dbReference type="Proteomes" id="UP000000803"/>
    </source>
</evidence>
<protein>
    <recommendedName>
        <fullName evidence="6">Protein spaetzle 3</fullName>
    </recommendedName>
    <alternativeName>
        <fullName evidence="10">Protein spatzle 3</fullName>
    </alternativeName>
</protein>
<feature type="signal peptide" evidence="2">
    <location>
        <begin position="1"/>
        <end position="14"/>
    </location>
</feature>
<feature type="chain" id="PRO_0000437665" description="Protein spaetzle 3" evidence="6">
    <location>
        <begin position="15"/>
        <end position="611"/>
    </location>
</feature>
<feature type="domain" description="Spaetzle" evidence="2">
    <location>
        <begin position="521"/>
        <end position="609"/>
    </location>
</feature>
<feature type="region of interest" description="Disordered" evidence="4">
    <location>
        <begin position="57"/>
        <end position="322"/>
    </location>
</feature>
<feature type="region of interest" description="Disordered" evidence="4">
    <location>
        <begin position="477"/>
        <end position="518"/>
    </location>
</feature>
<feature type="compositionally biased region" description="Low complexity" evidence="4">
    <location>
        <begin position="104"/>
        <end position="120"/>
    </location>
</feature>
<feature type="compositionally biased region" description="Low complexity" evidence="4">
    <location>
        <begin position="127"/>
        <end position="153"/>
    </location>
</feature>
<feature type="compositionally biased region" description="Low complexity" evidence="4">
    <location>
        <begin position="169"/>
        <end position="185"/>
    </location>
</feature>
<feature type="compositionally biased region" description="Polar residues" evidence="4">
    <location>
        <begin position="191"/>
        <end position="210"/>
    </location>
</feature>
<feature type="compositionally biased region" description="Pro residues" evidence="4">
    <location>
        <begin position="218"/>
        <end position="239"/>
    </location>
</feature>
<feature type="compositionally biased region" description="Acidic residues" evidence="4">
    <location>
        <begin position="288"/>
        <end position="306"/>
    </location>
</feature>
<feature type="compositionally biased region" description="Gly residues" evidence="4">
    <location>
        <begin position="487"/>
        <end position="498"/>
    </location>
</feature>
<feature type="glycosylation site" description="N-linked (GlcNAc...) asparagine" evidence="3">
    <location>
        <position position="5"/>
    </location>
</feature>
<feature type="glycosylation site" description="N-linked (GlcNAc...) asparagine" evidence="3">
    <location>
        <position position="335"/>
    </location>
</feature>
<feature type="glycosylation site" description="N-linked (GlcNAc...) asparagine" evidence="3">
    <location>
        <position position="351"/>
    </location>
</feature>
<feature type="glycosylation site" description="N-linked (GlcNAc...) asparagine" evidence="3">
    <location>
        <position position="511"/>
    </location>
</feature>
<feature type="disulfide bond" evidence="1">
    <location>
        <begin position="522"/>
        <end position="573"/>
    </location>
</feature>
<feature type="disulfide bond" evidence="1">
    <location>
        <begin position="559"/>
        <end position="605"/>
    </location>
</feature>
<feature type="disulfide bond" evidence="1">
    <location>
        <begin position="567"/>
        <end position="607"/>
    </location>
</feature>
<feature type="disulfide bond" description="Interchain" evidence="1">
    <location>
        <position position="604"/>
    </location>
</feature>
<comment type="function">
    <text evidence="5">Neurotrophin which may function as a ligand to the Toll-related receptor Tollo. Involved in a Tollo and JNK signaling pathway that positively regulates neuromuscular junction (NMJ) growth in presynaptic motorneurons. May function by activating Tollo to promote the phosphorylation of JNK.</text>
</comment>
<comment type="subunit">
    <text evidence="1">Homodimer; disulfide-linked.</text>
</comment>
<comment type="developmental stage">
    <text evidence="5">Expressed in larval muscles.</text>
</comment>
<comment type="disruption phenotype">
    <text evidence="5">RNAi-mediated knockdown has no effect on neuromuscular junction (NMJ) growth. However, conditional knockdown in the muscles results in a decrease in bouton number at the NMJs.</text>
</comment>
<comment type="miscellaneous">
    <text evidence="7">'Spaetzle' means 'noodles' in German.</text>
</comment>
<name>SPZ3_DROME</name>
<reference evidence="8" key="1">
    <citation type="journal article" date="2001" name="Proteins">
        <title>A family of proteins related to Spaetzle, the toll receptor ligand, are encoded in the Drosophila genome.</title>
        <authorList>
            <person name="Parker J.S."/>
            <person name="Mizuguchi K."/>
            <person name="Gay N.J."/>
        </authorList>
    </citation>
    <scope>NUCLEOTIDE SEQUENCE [MRNA]</scope>
    <scope>IDENTIFICATION</scope>
</reference>
<reference evidence="11" key="2">
    <citation type="journal article" date="2000" name="Science">
        <title>The genome sequence of Drosophila melanogaster.</title>
        <authorList>
            <person name="Adams M.D."/>
            <person name="Celniker S.E."/>
            <person name="Holt R.A."/>
            <person name="Evans C.A."/>
            <person name="Gocayne J.D."/>
            <person name="Amanatides P.G."/>
            <person name="Scherer S.E."/>
            <person name="Li P.W."/>
            <person name="Hoskins R.A."/>
            <person name="Galle R.F."/>
            <person name="George R.A."/>
            <person name="Lewis S.E."/>
            <person name="Richards S."/>
            <person name="Ashburner M."/>
            <person name="Henderson S.N."/>
            <person name="Sutton G.G."/>
            <person name="Wortman J.R."/>
            <person name="Yandell M.D."/>
            <person name="Zhang Q."/>
            <person name="Chen L.X."/>
            <person name="Brandon R.C."/>
            <person name="Rogers Y.-H.C."/>
            <person name="Blazej R.G."/>
            <person name="Champe M."/>
            <person name="Pfeiffer B.D."/>
            <person name="Wan K.H."/>
            <person name="Doyle C."/>
            <person name="Baxter E.G."/>
            <person name="Helt G."/>
            <person name="Nelson C.R."/>
            <person name="Miklos G.L.G."/>
            <person name="Abril J.F."/>
            <person name="Agbayani A."/>
            <person name="An H.-J."/>
            <person name="Andrews-Pfannkoch C."/>
            <person name="Baldwin D."/>
            <person name="Ballew R.M."/>
            <person name="Basu A."/>
            <person name="Baxendale J."/>
            <person name="Bayraktaroglu L."/>
            <person name="Beasley E.M."/>
            <person name="Beeson K.Y."/>
            <person name="Benos P.V."/>
            <person name="Berman B.P."/>
            <person name="Bhandari D."/>
            <person name="Bolshakov S."/>
            <person name="Borkova D."/>
            <person name="Botchan M.R."/>
            <person name="Bouck J."/>
            <person name="Brokstein P."/>
            <person name="Brottier P."/>
            <person name="Burtis K.C."/>
            <person name="Busam D.A."/>
            <person name="Butler H."/>
            <person name="Cadieu E."/>
            <person name="Center A."/>
            <person name="Chandra I."/>
            <person name="Cherry J.M."/>
            <person name="Cawley S."/>
            <person name="Dahlke C."/>
            <person name="Davenport L.B."/>
            <person name="Davies P."/>
            <person name="de Pablos B."/>
            <person name="Delcher A."/>
            <person name="Deng Z."/>
            <person name="Mays A.D."/>
            <person name="Dew I."/>
            <person name="Dietz S.M."/>
            <person name="Dodson K."/>
            <person name="Doup L.E."/>
            <person name="Downes M."/>
            <person name="Dugan-Rocha S."/>
            <person name="Dunkov B.C."/>
            <person name="Dunn P."/>
            <person name="Durbin K.J."/>
            <person name="Evangelista C.C."/>
            <person name="Ferraz C."/>
            <person name="Ferriera S."/>
            <person name="Fleischmann W."/>
            <person name="Fosler C."/>
            <person name="Gabrielian A.E."/>
            <person name="Garg N.S."/>
            <person name="Gelbart W.M."/>
            <person name="Glasser K."/>
            <person name="Glodek A."/>
            <person name="Gong F."/>
            <person name="Gorrell J.H."/>
            <person name="Gu Z."/>
            <person name="Guan P."/>
            <person name="Harris M."/>
            <person name="Harris N.L."/>
            <person name="Harvey D.A."/>
            <person name="Heiman T.J."/>
            <person name="Hernandez J.R."/>
            <person name="Houck J."/>
            <person name="Hostin D."/>
            <person name="Houston K.A."/>
            <person name="Howland T.J."/>
            <person name="Wei M.-H."/>
            <person name="Ibegwam C."/>
            <person name="Jalali M."/>
            <person name="Kalush F."/>
            <person name="Karpen G.H."/>
            <person name="Ke Z."/>
            <person name="Kennison J.A."/>
            <person name="Ketchum K.A."/>
            <person name="Kimmel B.E."/>
            <person name="Kodira C.D."/>
            <person name="Kraft C.L."/>
            <person name="Kravitz S."/>
            <person name="Kulp D."/>
            <person name="Lai Z."/>
            <person name="Lasko P."/>
            <person name="Lei Y."/>
            <person name="Levitsky A.A."/>
            <person name="Li J.H."/>
            <person name="Li Z."/>
            <person name="Liang Y."/>
            <person name="Lin X."/>
            <person name="Liu X."/>
            <person name="Mattei B."/>
            <person name="McIntosh T.C."/>
            <person name="McLeod M.P."/>
            <person name="McPherson D."/>
            <person name="Merkulov G."/>
            <person name="Milshina N.V."/>
            <person name="Mobarry C."/>
            <person name="Morris J."/>
            <person name="Moshrefi A."/>
            <person name="Mount S.M."/>
            <person name="Moy M."/>
            <person name="Murphy B."/>
            <person name="Murphy L."/>
            <person name="Muzny D.M."/>
            <person name="Nelson D.L."/>
            <person name="Nelson D.R."/>
            <person name="Nelson K.A."/>
            <person name="Nixon K."/>
            <person name="Nusskern D.R."/>
            <person name="Pacleb J.M."/>
            <person name="Palazzolo M."/>
            <person name="Pittman G.S."/>
            <person name="Pan S."/>
            <person name="Pollard J."/>
            <person name="Puri V."/>
            <person name="Reese M.G."/>
            <person name="Reinert K."/>
            <person name="Remington K."/>
            <person name="Saunders R.D.C."/>
            <person name="Scheeler F."/>
            <person name="Shen H."/>
            <person name="Shue B.C."/>
            <person name="Siden-Kiamos I."/>
            <person name="Simpson M."/>
            <person name="Skupski M.P."/>
            <person name="Smith T.J."/>
            <person name="Spier E."/>
            <person name="Spradling A.C."/>
            <person name="Stapleton M."/>
            <person name="Strong R."/>
            <person name="Sun E."/>
            <person name="Svirskas R."/>
            <person name="Tector C."/>
            <person name="Turner R."/>
            <person name="Venter E."/>
            <person name="Wang A.H."/>
            <person name="Wang X."/>
            <person name="Wang Z.-Y."/>
            <person name="Wassarman D.A."/>
            <person name="Weinstock G.M."/>
            <person name="Weissenbach J."/>
            <person name="Williams S.M."/>
            <person name="Woodage T."/>
            <person name="Worley K.C."/>
            <person name="Wu D."/>
            <person name="Yang S."/>
            <person name="Yao Q.A."/>
            <person name="Ye J."/>
            <person name="Yeh R.-F."/>
            <person name="Zaveri J.S."/>
            <person name="Zhan M."/>
            <person name="Zhang G."/>
            <person name="Zhao Q."/>
            <person name="Zheng L."/>
            <person name="Zheng X.H."/>
            <person name="Zhong F.N."/>
            <person name="Zhong W."/>
            <person name="Zhou X."/>
            <person name="Zhu S.C."/>
            <person name="Zhu X."/>
            <person name="Smith H.O."/>
            <person name="Gibbs R.A."/>
            <person name="Myers E.W."/>
            <person name="Rubin G.M."/>
            <person name="Venter J.C."/>
        </authorList>
    </citation>
    <scope>NUCLEOTIDE SEQUENCE [LARGE SCALE GENOMIC DNA]</scope>
    <source>
        <strain>Berkeley</strain>
    </source>
</reference>
<reference evidence="11" key="3">
    <citation type="journal article" date="2002" name="Genome Biol.">
        <title>Annotation of the Drosophila melanogaster euchromatic genome: a systematic review.</title>
        <authorList>
            <person name="Misra S."/>
            <person name="Crosby M.A."/>
            <person name="Mungall C.J."/>
            <person name="Matthews B.B."/>
            <person name="Campbell K.S."/>
            <person name="Hradecky P."/>
            <person name="Huang Y."/>
            <person name="Kaminker J.S."/>
            <person name="Millburn G.H."/>
            <person name="Prochnik S.E."/>
            <person name="Smith C.D."/>
            <person name="Tupy J.L."/>
            <person name="Whitfield E.J."/>
            <person name="Bayraktaroglu L."/>
            <person name="Berman B.P."/>
            <person name="Bettencourt B.R."/>
            <person name="Celniker S.E."/>
            <person name="de Grey A.D.N.J."/>
            <person name="Drysdale R.A."/>
            <person name="Harris N.L."/>
            <person name="Richter J."/>
            <person name="Russo S."/>
            <person name="Schroeder A.J."/>
            <person name="Shu S.Q."/>
            <person name="Stapleton M."/>
            <person name="Yamada C."/>
            <person name="Ashburner M."/>
            <person name="Gelbart W.M."/>
            <person name="Rubin G.M."/>
            <person name="Lewis S.E."/>
        </authorList>
    </citation>
    <scope>GENOME REANNOTATION</scope>
    <source>
        <strain evidence="11">Berkeley</strain>
    </source>
</reference>
<reference evidence="9" key="4">
    <citation type="submission" date="2002-06" db="EMBL/GenBank/DDBJ databases">
        <authorList>
            <person name="Stapleton M."/>
            <person name="Brokstein P."/>
            <person name="Hong L."/>
            <person name="Agbayani A."/>
            <person name="Carlson J."/>
            <person name="Champe M."/>
            <person name="Chavez C."/>
            <person name="Dorsett V."/>
            <person name="Dresnek D."/>
            <person name="Farfan D."/>
            <person name="Frise E."/>
            <person name="George R."/>
            <person name="Gonzalez M."/>
            <person name="Guarin H."/>
            <person name="Kronmiller B."/>
            <person name="Li P."/>
            <person name="Liao G."/>
            <person name="Miranda A."/>
            <person name="Mungall C.J."/>
            <person name="Nunoo J."/>
            <person name="Pacleb J."/>
            <person name="Paragas V."/>
            <person name="Park S."/>
            <person name="Patel S."/>
            <person name="Phouanenavong S."/>
            <person name="Wan K."/>
            <person name="Yu C."/>
            <person name="Lewis S.E."/>
            <person name="Rubin G.M."/>
            <person name="Celniker S."/>
        </authorList>
    </citation>
    <scope>NUCLEOTIDE SEQUENCE [LARGE SCALE MRNA]</scope>
    <source>
        <strain evidence="9">Berkeley</strain>
        <tissue evidence="9">Embryo</tissue>
    </source>
</reference>
<reference evidence="7" key="5">
    <citation type="journal article" date="2014" name="J. Cell Biol.">
        <title>Retrograde neurotrophin signaling through Tollo regulates synaptic growth in Drosophila.</title>
        <authorList>
            <person name="Ballard S.L."/>
            <person name="Miller D.L."/>
            <person name="Ganetzky B."/>
        </authorList>
    </citation>
    <scope>FUNCTION</scope>
    <scope>DEVELOPMENTAL STAGE</scope>
    <scope>DISRUPTION PHENOTYPE</scope>
</reference>
<sequence length="611" mass="67126">MALTNFSLPFGALGQPWGVTIAPLHPIHQLASNTNNLLYSPADHQQQTPAEAAADPEYFKNNPYAPPQSGGYQYQNTAGRRKQSNAYLPPTAPNAVRNSVYHIQQVQQTQQQQTQQQHQQQDQHENSVSFQSSSSRSSSSSTTGQSSIQLTQTHASGRGPAEGSYSRYPGQQAQPPQQQQPQQKQYFNAHGSASATFTKNSGSFSITSFGSRQQQQQPPQPQQPPPSQQQQPPPAPPPQRSRQAKPEAQPAQTYGVAPPENYPERAPGFTRVQAGQGSRTQVHAVLDYDVEEGEEDEEEDGEEEGQFYEGQENDKSNNNQMPTVTPIQGPIYLKNGTVPVVPLFSYPKLNNGSFLQIPIWWTALSVALGLDVRGDVIKGVPCIKRYHQLFCPTAGNSYPIDKIERFIDDNKALMRRMYGDFEMNMEGPGGGGGRQQGKVRKRRFIDEPDIFIPPGAFAANAGETVEAGDSYFGQLRKKRQAAAGGSRNRGGSAGGSGNGNTNANRQPGNKNGSSGTGRLDACESKIEIVTPYWASNSAGKIRAIVNTQHFEQAIHQEVCSNTQTPRCEGECGCEQKYKWHRLLAYDPDNDCKGIFMDWFLFPSCCVCRCNP</sequence>
<organism evidence="11">
    <name type="scientific">Drosophila melanogaster</name>
    <name type="common">Fruit fly</name>
    <dbReference type="NCBI Taxonomy" id="7227"/>
    <lineage>
        <taxon>Eukaryota</taxon>
        <taxon>Metazoa</taxon>
        <taxon>Ecdysozoa</taxon>
        <taxon>Arthropoda</taxon>
        <taxon>Hexapoda</taxon>
        <taxon>Insecta</taxon>
        <taxon>Pterygota</taxon>
        <taxon>Neoptera</taxon>
        <taxon>Endopterygota</taxon>
        <taxon>Diptera</taxon>
        <taxon>Brachycera</taxon>
        <taxon>Muscomorpha</taxon>
        <taxon>Ephydroidea</taxon>
        <taxon>Drosophilidae</taxon>
        <taxon>Drosophila</taxon>
        <taxon>Sophophora</taxon>
    </lineage>
</organism>